<comment type="function">
    <text evidence="1">One of the components of the core complex of photosystem II (PSII). PSII is a light-driven water:plastoquinone oxidoreductase that uses light energy to abstract electrons from H(2)O, generating O(2) and a proton gradient subsequently used for ATP formation. It consists of a core antenna complex that captures photons, and an electron transfer chain that converts photonic excitation into a charge separation.</text>
</comment>
<comment type="subunit">
    <text evidence="1">PSII is composed of 1 copy each of membrane proteins PsbA, PsbB, PsbC, PsbD, PsbE, PsbF, PsbH, PsbI, PsbJ, PsbK, PsbL, PsbM, PsbT, PsbX, PsbY, PsbZ, Psb30/Ycf12, at least 3 peripheral proteins of the oxygen-evolving complex and a large number of cofactors. It forms dimeric complexes.</text>
</comment>
<comment type="subcellular location">
    <subcellularLocation>
        <location evidence="1">Plastid membrane</location>
        <topology evidence="1">Single-pass membrane protein</topology>
    </subcellularLocation>
</comment>
<comment type="similarity">
    <text evidence="1">Belongs to the PsbJ family.</text>
</comment>
<comment type="caution">
    <text evidence="2">Young tissue from this organism is photosynthetic and contains some thylakoids, although the photosynthetic activity does not exceed the light compensation point.</text>
</comment>
<organism>
    <name type="scientific">Cuscuta exaltata</name>
    <name type="common">Tall dodder</name>
    <dbReference type="NCBI Taxonomy" id="476139"/>
    <lineage>
        <taxon>Eukaryota</taxon>
        <taxon>Viridiplantae</taxon>
        <taxon>Streptophyta</taxon>
        <taxon>Embryophyta</taxon>
        <taxon>Tracheophyta</taxon>
        <taxon>Spermatophyta</taxon>
        <taxon>Magnoliopsida</taxon>
        <taxon>eudicotyledons</taxon>
        <taxon>Gunneridae</taxon>
        <taxon>Pentapetalae</taxon>
        <taxon>asterids</taxon>
        <taxon>lamiids</taxon>
        <taxon>Solanales</taxon>
        <taxon>Convolvulaceae</taxon>
        <taxon>Cuscuteae</taxon>
        <taxon>Cuscuta</taxon>
        <taxon>Cuscuta subgen. Monogynella</taxon>
    </lineage>
</organism>
<sequence length="40" mass="4175">MTDTTGRIPLWIIGTVTGILVIGLIGIFFFGSYSGLGSSL</sequence>
<geneLocation type="plastid"/>
<protein>
    <recommendedName>
        <fullName evidence="1">Photosystem II reaction center protein J</fullName>
        <shortName evidence="1">PSII-J</shortName>
    </recommendedName>
</protein>
<gene>
    <name evidence="1" type="primary">psbJ</name>
</gene>
<reference key="1">
    <citation type="journal article" date="2007" name="BMC Plant Biol.">
        <title>Complete plastid genome sequences suggest strong selection for retention of photosynthetic genes in the parasitic plant genus Cuscuta.</title>
        <authorList>
            <person name="McNeal J.R."/>
            <person name="Kuehl J.V."/>
            <person name="Boore J.L."/>
            <person name="dePamphilis C.W."/>
        </authorList>
    </citation>
    <scope>NUCLEOTIDE SEQUENCE [LARGE SCALE GENOMIC DNA]</scope>
</reference>
<keyword id="KW-0472">Membrane</keyword>
<keyword id="KW-0602">Photosynthesis</keyword>
<keyword id="KW-0604">Photosystem II</keyword>
<keyword id="KW-0934">Plastid</keyword>
<keyword id="KW-0674">Reaction center</keyword>
<keyword id="KW-0812">Transmembrane</keyword>
<keyword id="KW-1133">Transmembrane helix</keyword>
<proteinExistence type="inferred from homology"/>
<feature type="chain" id="PRO_0000322053" description="Photosystem II reaction center protein J">
    <location>
        <begin position="1"/>
        <end position="40"/>
    </location>
</feature>
<feature type="transmembrane region" description="Helical" evidence="1">
    <location>
        <begin position="10"/>
        <end position="30"/>
    </location>
</feature>
<evidence type="ECO:0000255" key="1">
    <source>
        <dbReference type="HAMAP-Rule" id="MF_01305"/>
    </source>
</evidence>
<evidence type="ECO:0000305" key="2"/>
<dbReference type="EMBL" id="EU189132">
    <property type="protein sequence ID" value="ABW83701.1"/>
    <property type="molecule type" value="Genomic_DNA"/>
</dbReference>
<dbReference type="RefSeq" id="YP_001542537.1">
    <property type="nucleotide sequence ID" value="NC_009963.1"/>
</dbReference>
<dbReference type="SMR" id="A8W3D0"/>
<dbReference type="GeneID" id="5729660"/>
<dbReference type="GO" id="GO:0009539">
    <property type="term" value="C:photosystem II reaction center"/>
    <property type="evidence" value="ECO:0007669"/>
    <property type="project" value="InterPro"/>
</dbReference>
<dbReference type="GO" id="GO:0042170">
    <property type="term" value="C:plastid membrane"/>
    <property type="evidence" value="ECO:0007669"/>
    <property type="project" value="UniProtKB-SubCell"/>
</dbReference>
<dbReference type="GO" id="GO:0042651">
    <property type="term" value="C:thylakoid membrane"/>
    <property type="evidence" value="ECO:0007669"/>
    <property type="project" value="UniProtKB-UniRule"/>
</dbReference>
<dbReference type="GO" id="GO:0015979">
    <property type="term" value="P:photosynthesis"/>
    <property type="evidence" value="ECO:0007669"/>
    <property type="project" value="UniProtKB-UniRule"/>
</dbReference>
<dbReference type="Gene3D" id="6.10.250.2070">
    <property type="match status" value="1"/>
</dbReference>
<dbReference type="HAMAP" id="MF_01305">
    <property type="entry name" value="PSII_PsbJ"/>
    <property type="match status" value="1"/>
</dbReference>
<dbReference type="InterPro" id="IPR002682">
    <property type="entry name" value="PSII_PsbJ"/>
</dbReference>
<dbReference type="InterPro" id="IPR037267">
    <property type="entry name" value="PSII_PsbJ_sf"/>
</dbReference>
<dbReference type="NCBIfam" id="NF002722">
    <property type="entry name" value="PRK02565.1"/>
    <property type="match status" value="1"/>
</dbReference>
<dbReference type="PANTHER" id="PTHR34812">
    <property type="entry name" value="PHOTOSYSTEM II REACTION CENTER PROTEIN J"/>
    <property type="match status" value="1"/>
</dbReference>
<dbReference type="PANTHER" id="PTHR34812:SF3">
    <property type="entry name" value="PHOTOSYSTEM II REACTION CENTER PROTEIN J"/>
    <property type="match status" value="1"/>
</dbReference>
<dbReference type="Pfam" id="PF01788">
    <property type="entry name" value="PsbJ"/>
    <property type="match status" value="1"/>
</dbReference>
<dbReference type="SUPFAM" id="SSF161021">
    <property type="entry name" value="Photosystem II reaction center protein J, PsbJ"/>
    <property type="match status" value="1"/>
</dbReference>
<accession>A8W3D0</accession>
<name>PSBJ_CUSEX</name>